<keyword id="KW-0997">Cell inner membrane</keyword>
<keyword id="KW-1003">Cell membrane</keyword>
<keyword id="KW-0472">Membrane</keyword>
<keyword id="KW-1185">Reference proteome</keyword>
<sequence>MIARLLILIARAWQLGPSRVLPPTCRYAPSCSEYAIVALRRHGAIKGGWIATKRLLRCHPWGGHGYDPVP</sequence>
<reference key="1">
    <citation type="journal article" date="2009" name="Proc. Natl. Acad. Sci. U.S.A.">
        <title>The genomic basis of trophic strategy in marine bacteria.</title>
        <authorList>
            <person name="Lauro F.M."/>
            <person name="McDougald D."/>
            <person name="Thomas T."/>
            <person name="Williams T.J."/>
            <person name="Egan S."/>
            <person name="Rice S."/>
            <person name="DeMaere M.Z."/>
            <person name="Ting L."/>
            <person name="Ertan H."/>
            <person name="Johnson J."/>
            <person name="Ferriera S."/>
            <person name="Lapidus A."/>
            <person name="Anderson I."/>
            <person name="Kyrpides N."/>
            <person name="Munk A.C."/>
            <person name="Detter C."/>
            <person name="Han C.S."/>
            <person name="Brown M.V."/>
            <person name="Robb F.T."/>
            <person name="Kjelleberg S."/>
            <person name="Cavicchioli R."/>
        </authorList>
    </citation>
    <scope>NUCLEOTIDE SEQUENCE [LARGE SCALE GENOMIC DNA]</scope>
    <source>
        <strain>DSM 13593 / LMG 18877 / RB2256</strain>
    </source>
</reference>
<organism>
    <name type="scientific">Sphingopyxis alaskensis (strain DSM 13593 / LMG 18877 / RB2256)</name>
    <name type="common">Sphingomonas alaskensis</name>
    <dbReference type="NCBI Taxonomy" id="317655"/>
    <lineage>
        <taxon>Bacteria</taxon>
        <taxon>Pseudomonadati</taxon>
        <taxon>Pseudomonadota</taxon>
        <taxon>Alphaproteobacteria</taxon>
        <taxon>Sphingomonadales</taxon>
        <taxon>Sphingomonadaceae</taxon>
        <taxon>Sphingopyxis</taxon>
    </lineage>
</organism>
<name>YIDD_SPHAL</name>
<feature type="chain" id="PRO_0000253172" description="Putative membrane protein insertion efficiency factor">
    <location>
        <begin position="1"/>
        <end position="70"/>
    </location>
</feature>
<comment type="function">
    <text evidence="1">Could be involved in insertion of integral membrane proteins into the membrane.</text>
</comment>
<comment type="subcellular location">
    <subcellularLocation>
        <location evidence="1">Cell inner membrane</location>
        <topology evidence="1">Peripheral membrane protein</topology>
        <orientation evidence="1">Cytoplasmic side</orientation>
    </subcellularLocation>
</comment>
<comment type="similarity">
    <text evidence="1">Belongs to the UPF0161 family.</text>
</comment>
<accession>Q1GN72</accession>
<protein>
    <recommendedName>
        <fullName evidence="1">Putative membrane protein insertion efficiency factor</fullName>
    </recommendedName>
</protein>
<dbReference type="EMBL" id="CP000356">
    <property type="protein sequence ID" value="ABF51731.1"/>
    <property type="molecule type" value="Genomic_DNA"/>
</dbReference>
<dbReference type="RefSeq" id="WP_011540346.1">
    <property type="nucleotide sequence ID" value="NC_008048.1"/>
</dbReference>
<dbReference type="STRING" id="317655.Sala_0005"/>
<dbReference type="KEGG" id="sal:Sala_0005"/>
<dbReference type="eggNOG" id="COG0759">
    <property type="taxonomic scope" value="Bacteria"/>
</dbReference>
<dbReference type="HOGENOM" id="CLU_144811_6_1_5"/>
<dbReference type="OrthoDB" id="9801753at2"/>
<dbReference type="Proteomes" id="UP000006578">
    <property type="component" value="Chromosome"/>
</dbReference>
<dbReference type="GO" id="GO:0005886">
    <property type="term" value="C:plasma membrane"/>
    <property type="evidence" value="ECO:0007669"/>
    <property type="project" value="UniProtKB-SubCell"/>
</dbReference>
<dbReference type="HAMAP" id="MF_00386">
    <property type="entry name" value="UPF0161_YidD"/>
    <property type="match status" value="1"/>
</dbReference>
<dbReference type="InterPro" id="IPR002696">
    <property type="entry name" value="Membr_insert_effic_factor_YidD"/>
</dbReference>
<dbReference type="NCBIfam" id="TIGR00278">
    <property type="entry name" value="membrane protein insertion efficiency factor YidD"/>
    <property type="match status" value="1"/>
</dbReference>
<dbReference type="PANTHER" id="PTHR33383">
    <property type="entry name" value="MEMBRANE PROTEIN INSERTION EFFICIENCY FACTOR-RELATED"/>
    <property type="match status" value="1"/>
</dbReference>
<dbReference type="PANTHER" id="PTHR33383:SF1">
    <property type="entry name" value="MEMBRANE PROTEIN INSERTION EFFICIENCY FACTOR-RELATED"/>
    <property type="match status" value="1"/>
</dbReference>
<dbReference type="Pfam" id="PF01809">
    <property type="entry name" value="YidD"/>
    <property type="match status" value="1"/>
</dbReference>
<dbReference type="SMART" id="SM01234">
    <property type="entry name" value="Haemolytic"/>
    <property type="match status" value="1"/>
</dbReference>
<evidence type="ECO:0000255" key="1">
    <source>
        <dbReference type="HAMAP-Rule" id="MF_00386"/>
    </source>
</evidence>
<proteinExistence type="inferred from homology"/>
<gene>
    <name type="ordered locus">Sala_0005</name>
</gene>